<protein>
    <recommendedName>
        <fullName evidence="1">SsrA-binding protein</fullName>
    </recommendedName>
    <alternativeName>
        <fullName evidence="1">Small protein B</fullName>
    </alternativeName>
</protein>
<reference key="1">
    <citation type="journal article" date="2009" name="J. Bacteriol.">
        <title>Complete and draft genome sequences of six members of the Aquificales.</title>
        <authorList>
            <person name="Reysenbach A.-L."/>
            <person name="Hamamura N."/>
            <person name="Podar M."/>
            <person name="Griffiths E."/>
            <person name="Ferreira S."/>
            <person name="Hochstein R."/>
            <person name="Heidelberg J."/>
            <person name="Johnson J."/>
            <person name="Mead D."/>
            <person name="Pohorille A."/>
            <person name="Sarmiento M."/>
            <person name="Schweighofer K."/>
            <person name="Seshadri R."/>
            <person name="Voytek M.A."/>
        </authorList>
    </citation>
    <scope>NUCLEOTIDE SEQUENCE [LARGE SCALE GENOMIC DNA]</scope>
    <source>
        <strain>DSM 14350 / EX-H1</strain>
    </source>
</reference>
<gene>
    <name evidence="1" type="primary">smpB</name>
    <name type="ordered locus">PERMA_0604</name>
</gene>
<keyword id="KW-0963">Cytoplasm</keyword>
<keyword id="KW-1185">Reference proteome</keyword>
<keyword id="KW-0694">RNA-binding</keyword>
<accession>C0QUM8</accession>
<dbReference type="EMBL" id="CP001230">
    <property type="protein sequence ID" value="ACO04058.1"/>
    <property type="molecule type" value="Genomic_DNA"/>
</dbReference>
<dbReference type="RefSeq" id="WP_012676296.1">
    <property type="nucleotide sequence ID" value="NC_012440.1"/>
</dbReference>
<dbReference type="SMR" id="C0QUM8"/>
<dbReference type="STRING" id="123214.PERMA_0604"/>
<dbReference type="PaxDb" id="123214-PERMA_0604"/>
<dbReference type="KEGG" id="pmx:PERMA_0604"/>
<dbReference type="eggNOG" id="COG0691">
    <property type="taxonomic scope" value="Bacteria"/>
</dbReference>
<dbReference type="HOGENOM" id="CLU_108953_0_1_0"/>
<dbReference type="OrthoDB" id="9805462at2"/>
<dbReference type="Proteomes" id="UP000001366">
    <property type="component" value="Chromosome"/>
</dbReference>
<dbReference type="GO" id="GO:0005829">
    <property type="term" value="C:cytosol"/>
    <property type="evidence" value="ECO:0007669"/>
    <property type="project" value="TreeGrafter"/>
</dbReference>
<dbReference type="GO" id="GO:0003723">
    <property type="term" value="F:RNA binding"/>
    <property type="evidence" value="ECO:0007669"/>
    <property type="project" value="UniProtKB-UniRule"/>
</dbReference>
<dbReference type="GO" id="GO:0070929">
    <property type="term" value="P:trans-translation"/>
    <property type="evidence" value="ECO:0007669"/>
    <property type="project" value="UniProtKB-UniRule"/>
</dbReference>
<dbReference type="CDD" id="cd09294">
    <property type="entry name" value="SmpB"/>
    <property type="match status" value="1"/>
</dbReference>
<dbReference type="Gene3D" id="2.40.280.10">
    <property type="match status" value="1"/>
</dbReference>
<dbReference type="HAMAP" id="MF_00023">
    <property type="entry name" value="SmpB"/>
    <property type="match status" value="1"/>
</dbReference>
<dbReference type="InterPro" id="IPR023620">
    <property type="entry name" value="SmpB"/>
</dbReference>
<dbReference type="InterPro" id="IPR000037">
    <property type="entry name" value="SsrA-bd_prot"/>
</dbReference>
<dbReference type="InterPro" id="IPR020081">
    <property type="entry name" value="SsrA-bd_prot_CS"/>
</dbReference>
<dbReference type="NCBIfam" id="NF003843">
    <property type="entry name" value="PRK05422.1"/>
    <property type="match status" value="1"/>
</dbReference>
<dbReference type="NCBIfam" id="TIGR00086">
    <property type="entry name" value="smpB"/>
    <property type="match status" value="1"/>
</dbReference>
<dbReference type="PANTHER" id="PTHR30308:SF2">
    <property type="entry name" value="SSRA-BINDING PROTEIN"/>
    <property type="match status" value="1"/>
</dbReference>
<dbReference type="PANTHER" id="PTHR30308">
    <property type="entry name" value="TMRNA-BINDING COMPONENT OF TRANS-TRANSLATION TAGGING COMPLEX"/>
    <property type="match status" value="1"/>
</dbReference>
<dbReference type="Pfam" id="PF01668">
    <property type="entry name" value="SmpB"/>
    <property type="match status" value="1"/>
</dbReference>
<dbReference type="SUPFAM" id="SSF74982">
    <property type="entry name" value="Small protein B (SmpB)"/>
    <property type="match status" value="1"/>
</dbReference>
<dbReference type="PROSITE" id="PS01317">
    <property type="entry name" value="SSRP"/>
    <property type="match status" value="1"/>
</dbReference>
<evidence type="ECO:0000255" key="1">
    <source>
        <dbReference type="HAMAP-Rule" id="MF_00023"/>
    </source>
</evidence>
<comment type="function">
    <text evidence="1">Required for rescue of stalled ribosomes mediated by trans-translation. Binds to transfer-messenger RNA (tmRNA), required for stable association of tmRNA with ribosomes. tmRNA and SmpB together mimic tRNA shape, replacing the anticodon stem-loop with SmpB. tmRNA is encoded by the ssrA gene; the 2 termini fold to resemble tRNA(Ala) and it encodes a 'tag peptide', a short internal open reading frame. During trans-translation Ala-aminoacylated tmRNA acts like a tRNA, entering the A-site of stalled ribosomes, displacing the stalled mRNA. The ribosome then switches to translate the ORF on the tmRNA; the nascent peptide is terminated with the 'tag peptide' encoded by the tmRNA and targeted for degradation. The ribosome is freed to recommence translation, which seems to be the essential function of trans-translation.</text>
</comment>
<comment type="subcellular location">
    <subcellularLocation>
        <location evidence="1">Cytoplasm</location>
    </subcellularLocation>
    <text evidence="1">The tmRNA-SmpB complex associates with stalled 70S ribosomes.</text>
</comment>
<comment type="similarity">
    <text evidence="1">Belongs to the SmpB family.</text>
</comment>
<name>SSRP_PERMH</name>
<organism>
    <name type="scientific">Persephonella marina (strain DSM 14350 / EX-H1)</name>
    <dbReference type="NCBI Taxonomy" id="123214"/>
    <lineage>
        <taxon>Bacteria</taxon>
        <taxon>Pseudomonadati</taxon>
        <taxon>Aquificota</taxon>
        <taxon>Aquificia</taxon>
        <taxon>Aquificales</taxon>
        <taxon>Hydrogenothermaceae</taxon>
        <taxon>Persephonella</taxon>
    </lineage>
</organism>
<proteinExistence type="inferred from homology"/>
<feature type="chain" id="PRO_1000197619" description="SsrA-binding protein">
    <location>
        <begin position="1"/>
        <end position="152"/>
    </location>
</feature>
<sequence length="152" mass="17568">MGIKVVATNKVAYHNYNIIETYEAGIVLKGSEVKSIREGSVNLRDSFVRIDNGEAFIYNMYIAPYKPASKLQHDPYRKRKLLLHKREILKLMGKVQEKGLTIIPTKVYLKNGKVKIEIALAKGKAKYEKREAIKERDMKRELSKKYKGKIKL</sequence>